<sequence>MGAALALLGDLVASVSEAAAATGFSVAEIAAGEAAAAIEVQIASLATVEGITSTSEAIAAIGLTPQTYAVIAGAPGAIAGFAALIQTVSGISSLAQVGYRFFSDWDHKVSTVGLYQQSGMALELFNPDEYYDILFPGVNTFVNNIQYLDPRHWGPSLFATISQALWHVIRDDIPSITSQELQRRTERFFRDSLARFLEETTWTIVNAPINFYNYIQQYYSDLSPIRPSMVRQVAEREGTRVHFGHTYSIDDADSIEEVTQRMDLRNQQSVHSGEFIEKTIAPGGANQRTAPQWMLPLLLGLYGTVTPALEAYEDGPNQKKRRVSRGSSQKAKGTRASAKTTNKRRSRSSRS</sequence>
<reference key="1">
    <citation type="journal article" date="1979" name="Cell">
        <title>The genome of human papovavirus BKV.</title>
        <authorList>
            <person name="Seif I."/>
            <person name="Khoury G."/>
            <person name="Dhar R."/>
        </authorList>
    </citation>
    <scope>NUCLEOTIDE SEQUENCE [GENOMIC DNA]</scope>
    <source>
        <strain>Dunlop</strain>
    </source>
</reference>
<reference key="2">
    <citation type="journal article" date="1979" name="Science">
        <title>BK virus DNA: complete nucleotide sequence of a human tumor virus.</title>
        <authorList>
            <person name="Yang R.C.A."/>
            <person name="Wu R."/>
        </authorList>
    </citation>
    <scope>NUCLEOTIDE SEQUENCE [GENOMIC DNA]</scope>
    <source>
        <strain>MM</strain>
    </source>
</reference>
<reference key="3">
    <citation type="journal article" date="2009" name="Virology">
        <title>The Polyomaviridae: Contributions of virus structure to our understanding of virus receptors and infectious entry.</title>
        <authorList>
            <person name="Neu U."/>
            <person name="Stehle T."/>
            <person name="Atwood W.J."/>
        </authorList>
    </citation>
    <scope>REVIEW</scope>
</reference>
<proteinExistence type="evidence at protein level"/>
<name>VP2_POVBK</name>
<feature type="initiator methionine" description="Removed; by host" evidence="1">
    <location>
        <position position="1"/>
    </location>
</feature>
<feature type="chain" id="PRO_0000039205" description="Minor capsid protein VP2">
    <location>
        <begin position="2"/>
        <end position="351"/>
    </location>
</feature>
<feature type="transmembrane region" description="Helical" evidence="2">
    <location>
        <begin position="289"/>
        <end position="309"/>
    </location>
</feature>
<feature type="region of interest" description="D1" evidence="1">
    <location>
        <begin position="272"/>
        <end position="307"/>
    </location>
</feature>
<feature type="region of interest" description="Disordered" evidence="3">
    <location>
        <begin position="312"/>
        <end position="351"/>
    </location>
</feature>
<feature type="region of interest" description="DNA-binding" evidence="1">
    <location>
        <begin position="312"/>
        <end position="351"/>
    </location>
</feature>
<feature type="short sequence motif" description="Nuclear localization signal" evidence="1">
    <location>
        <begin position="315"/>
        <end position="323"/>
    </location>
</feature>
<feature type="compositionally biased region" description="Basic residues" evidence="3">
    <location>
        <begin position="341"/>
        <end position="351"/>
    </location>
</feature>
<feature type="lipid moiety-binding region" description="N-myristoyl glycine; by host" evidence="1">
    <location>
        <position position="2"/>
    </location>
</feature>
<feature type="splice variant" id="VSP_036014" description="In isoform VP4." evidence="4">
    <location>
        <begin position="1"/>
        <end position="228"/>
    </location>
</feature>
<feature type="splice variant" id="VSP_018916" description="In isoform VP3." evidence="4">
    <location>
        <begin position="1"/>
        <end position="119"/>
    </location>
</feature>
<feature type="sequence variant" description="In strain: Dunlop.">
    <original>R</original>
    <variation>K</variation>
    <location>
        <position position="100"/>
    </location>
</feature>
<feature type="sequence variant" description="In strain: Dunlop.">
    <original>S</original>
    <variation>D</variation>
    <location>
        <position position="103"/>
    </location>
</feature>
<feature type="sequence variant" description="In strain: MM.">
    <original>Y</original>
    <variation>C</variation>
    <location>
        <position position="312"/>
    </location>
</feature>
<feature type="helix" evidence="5">
    <location>
        <begin position="292"/>
        <end position="294"/>
    </location>
</feature>
<feature type="helix" evidence="5">
    <location>
        <begin position="295"/>
        <end position="299"/>
    </location>
</feature>
<organismHost>
    <name type="scientific">Homo sapiens</name>
    <name type="common">Human</name>
    <dbReference type="NCBI Taxonomy" id="9606"/>
</organismHost>
<organism>
    <name type="scientific">BK polyomavirus</name>
    <name type="common">BKPyV</name>
    <name type="synonym">Human polyomavirus 1</name>
    <dbReference type="NCBI Taxonomy" id="1891762"/>
    <lineage>
        <taxon>Viruses</taxon>
        <taxon>Monodnaviria</taxon>
        <taxon>Shotokuvirae</taxon>
        <taxon>Cossaviricota</taxon>
        <taxon>Papovaviricetes</taxon>
        <taxon>Sepolyvirales</taxon>
        <taxon>Polyomaviridae</taxon>
        <taxon>Betapolyomavirus</taxon>
    </lineage>
</organism>
<accession>P03094</accession>
<evidence type="ECO:0000250" key="1"/>
<evidence type="ECO:0000255" key="2"/>
<evidence type="ECO:0000256" key="3">
    <source>
        <dbReference type="SAM" id="MobiDB-lite"/>
    </source>
</evidence>
<evidence type="ECO:0000305" key="4"/>
<evidence type="ECO:0007829" key="5">
    <source>
        <dbReference type="PDB" id="6ESB"/>
    </source>
</evidence>
<dbReference type="EMBL" id="V01108">
    <property type="protein sequence ID" value="CAA24297.1"/>
    <property type="molecule type" value="Genomic_DNA"/>
</dbReference>
<dbReference type="EMBL" id="V01109">
    <property type="protein sequence ID" value="CAA24305.1"/>
    <property type="molecule type" value="Genomic_DNA"/>
</dbReference>
<dbReference type="PIR" id="A03632">
    <property type="entry name" value="VVVP2B"/>
</dbReference>
<dbReference type="RefSeq" id="YP_717937.1">
    <property type="nucleotide sequence ID" value="NC_001538.1"/>
</dbReference>
<dbReference type="RefSeq" id="YP_717938.1">
    <molecule id="P03094-2"/>
    <property type="nucleotide sequence ID" value="NC_001538.1"/>
</dbReference>
<dbReference type="PDB" id="6ESB">
    <property type="method" value="EM"/>
    <property type="resolution" value="3.40 A"/>
    <property type="chains" value="7=2-351"/>
</dbReference>
<dbReference type="PDBsum" id="6ESB"/>
<dbReference type="EMDB" id="EMD-3944"/>
<dbReference type="SMR" id="P03094"/>
<dbReference type="DNASU" id="29031010"/>
<dbReference type="GeneID" id="29031010"/>
<dbReference type="KEGG" id="vg:29031010"/>
<dbReference type="OrthoDB" id="6378at10239"/>
<dbReference type="Proteomes" id="UP000008475">
    <property type="component" value="Genome"/>
</dbReference>
<dbReference type="Proteomes" id="UP000008990">
    <property type="component" value="Genome"/>
</dbReference>
<dbReference type="GO" id="GO:0043657">
    <property type="term" value="C:host cell"/>
    <property type="evidence" value="ECO:0007669"/>
    <property type="project" value="GOC"/>
</dbReference>
<dbReference type="GO" id="GO:0044167">
    <property type="term" value="C:host cell endoplasmic reticulum membrane"/>
    <property type="evidence" value="ECO:0007669"/>
    <property type="project" value="UniProtKB-SubCell"/>
</dbReference>
<dbReference type="GO" id="GO:0042025">
    <property type="term" value="C:host cell nucleus"/>
    <property type="evidence" value="ECO:0007669"/>
    <property type="project" value="UniProtKB-SubCell"/>
</dbReference>
<dbReference type="GO" id="GO:0016020">
    <property type="term" value="C:membrane"/>
    <property type="evidence" value="ECO:0007669"/>
    <property type="project" value="UniProtKB-KW"/>
</dbReference>
<dbReference type="GO" id="GO:0019028">
    <property type="term" value="C:viral capsid"/>
    <property type="evidence" value="ECO:0007669"/>
    <property type="project" value="UniProtKB-KW"/>
</dbReference>
<dbReference type="GO" id="GO:0015267">
    <property type="term" value="F:channel activity"/>
    <property type="evidence" value="ECO:0007669"/>
    <property type="project" value="UniProtKB-KW"/>
</dbReference>
<dbReference type="GO" id="GO:0003677">
    <property type="term" value="F:DNA binding"/>
    <property type="evidence" value="ECO:0007669"/>
    <property type="project" value="UniProtKB-KW"/>
</dbReference>
<dbReference type="GO" id="GO:0005198">
    <property type="term" value="F:structural molecule activity"/>
    <property type="evidence" value="ECO:0007669"/>
    <property type="project" value="InterPro"/>
</dbReference>
<dbReference type="GO" id="GO:0034220">
    <property type="term" value="P:monoatomic ion transmembrane transport"/>
    <property type="evidence" value="ECO:0007669"/>
    <property type="project" value="UniProtKB-KW"/>
</dbReference>
<dbReference type="GO" id="GO:0140267">
    <property type="term" value="P:symbiont entry into host cell via permeabilization of host membrane"/>
    <property type="evidence" value="ECO:0007669"/>
    <property type="project" value="UniProtKB-KW"/>
</dbReference>
<dbReference type="GO" id="GO:0075732">
    <property type="term" value="P:viral penetration into host nucleus"/>
    <property type="evidence" value="ECO:0007669"/>
    <property type="project" value="UniProtKB-KW"/>
</dbReference>
<dbReference type="GO" id="GO:0019062">
    <property type="term" value="P:virion attachment to host cell"/>
    <property type="evidence" value="ECO:0007669"/>
    <property type="project" value="UniProtKB-KW"/>
</dbReference>
<dbReference type="InterPro" id="IPR001070">
    <property type="entry name" value="Polyoma_coat_VP2"/>
</dbReference>
<dbReference type="Pfam" id="PF00761">
    <property type="entry name" value="Polyoma_coat2"/>
    <property type="match status" value="1"/>
</dbReference>
<dbReference type="PIRSF" id="PIRSF003377">
    <property type="entry name" value="Polyoma_coat2"/>
    <property type="match status" value="1"/>
</dbReference>
<protein>
    <recommendedName>
        <fullName>Minor capsid protein VP2</fullName>
    </recommendedName>
    <alternativeName>
        <fullName>Minor structural protein VP2</fullName>
    </alternativeName>
</protein>
<keyword id="KW-0002">3D-structure</keyword>
<keyword id="KW-0024">Alternative initiation</keyword>
<keyword id="KW-0025">Alternative splicing</keyword>
<keyword id="KW-0167">Capsid protein</keyword>
<keyword id="KW-0238">DNA-binding</keyword>
<keyword id="KW-1038">Host endoplasmic reticulum</keyword>
<keyword id="KW-1043">Host membrane</keyword>
<keyword id="KW-1048">Host nucleus</keyword>
<keyword id="KW-0945">Host-virus interaction</keyword>
<keyword id="KW-0407">Ion channel</keyword>
<keyword id="KW-0406">Ion transport</keyword>
<keyword id="KW-0426">Late protein</keyword>
<keyword id="KW-0449">Lipoprotein</keyword>
<keyword id="KW-0472">Membrane</keyword>
<keyword id="KW-0519">Myristate</keyword>
<keyword id="KW-0812">Transmembrane</keyword>
<keyword id="KW-1133">Transmembrane helix</keyword>
<keyword id="KW-0813">Transport</keyword>
<keyword id="KW-1161">Viral attachment to host cell</keyword>
<keyword id="KW-1182">Viral ion channel</keyword>
<keyword id="KW-1162">Viral penetration into host cytoplasm</keyword>
<keyword id="KW-1163">Viral penetration into host nucleus</keyword>
<keyword id="KW-1173">Viral penetration via permeabilization of host membrane</keyword>
<keyword id="KW-1188">Viral release from host cell</keyword>
<keyword id="KW-0946">Virion</keyword>
<keyword id="KW-1160">Virus entry into host cell</keyword>
<comment type="function">
    <molecule>Isoform VP2</molecule>
    <text evidence="1">Structural protein that resides within the core of the capsid surrounded by 72 VP1 pentamers. Participates in host cell receptor binding together with VP1. Following virus endocytosis and trafficking to the endoplasmic reticulum, VP2 and VP3 form oligomers and integrate into the endoplasmic reticulum membrane. Heterooligomer VP2-VP3 may create a viroporin for transporting the viral genome across the endoplasmic reticulum membrane to the cytoplasm. Nuclear entry of the viral DNA involves the selective exposure and importin recognition of VP2 or VP3 nuclear localization signal (shared C-terminus). Plays a role in virion assembly within the nucleus in particular through a DNA-binding domain located in the C-terminal region. A N-terminal myristoylation suggests a scaffold function for virion assembly (By similarity).</text>
</comment>
<comment type="function">
    <molecule>Isoform VP3</molecule>
    <text evidence="1">Structural protein that resides within the core of the capsid surrounded by 72 VP1 pentamers. Following virus endocytosis and trafficking to the endoplasmic reticulum, VP2 and VP3 form oligomers and integrate into the endoplasmic reticulum membrane. Heterooligomer VP2-VP3 may create a viroporin for transporting the viral genome across the endoplasmic reticulum membrane to the cytoplasm. Nuclear entry of the viral DNA involves the selective exposure and importin recognition of VP2 or VP3 nuclear localization signal (shared C-terminus). Plays a role in virion assembly within the nucleus. May participate in host cell lysis when associated with VP4 (By similarity).</text>
</comment>
<comment type="function">
    <molecule>Isoform VP4</molecule>
    <text evidence="1">Viroporin inducing perforation of cellular membranes to trigger virus progeny release. Forms pores of 3 nm inner diameter. VP4 is expressed about 24 hours after the late structural proteins and is not incorporated into the mature virion (By similarity).</text>
</comment>
<comment type="subunit">
    <molecule>Isoform VP2</molecule>
    <text evidence="4">Forms homooligomers, and heterooligomers with VP3 in the endoplasmic reticulum membrane. Interacts (via D1 domain) with VP1.</text>
</comment>
<comment type="subunit">
    <molecule>Isoform VP3</molecule>
    <text evidence="1">Forms homooligomers, and heterooligomers with VP2 in the endoplasmic reticulum membrane. Interacts (via D1 domain) with VP1 (By similarity).</text>
</comment>
<comment type="subcellular location">
    <molecule>Isoform VP2</molecule>
    <subcellularLocation>
        <location>Virion</location>
    </subcellularLocation>
    <subcellularLocation>
        <location>Host nucleus</location>
    </subcellularLocation>
    <subcellularLocation>
        <location>Host endoplasmic reticulum</location>
    </subcellularLocation>
    <subcellularLocation>
        <location evidence="1">Host endoplasmic reticulum membrane</location>
    </subcellularLocation>
</comment>
<comment type="subcellular location">
    <molecule>Isoform VP3</molecule>
    <subcellularLocation>
        <location>Virion</location>
    </subcellularLocation>
    <subcellularLocation>
        <location>Host nucleus</location>
    </subcellularLocation>
    <subcellularLocation>
        <location>Host endoplasmic reticulum</location>
    </subcellularLocation>
    <subcellularLocation>
        <location evidence="1">Host endoplasmic reticulum membrane</location>
    </subcellularLocation>
</comment>
<comment type="subcellular location">
    <molecule>Isoform VP4</molecule>
    <subcellularLocation>
        <location evidence="1">Host nucleus</location>
    </subcellularLocation>
</comment>
<comment type="alternative products">
    <event type="alternative splicing"/>
    <event type="alternative initiation"/>
    <isoform>
        <id>P03094-1</id>
        <name>VP2</name>
        <name>Minor capsid protein VP2</name>
        <sequence type="displayed"/>
    </isoform>
    <isoform>
        <id>P03094-2</id>
        <name>VP3</name>
        <name>Minor capsid protein VP3</name>
        <sequence type="described" ref="VSP_018916"/>
    </isoform>
    <isoform>
        <id>P03094-3</id>
        <name>VP4</name>
        <name>Viroporin VP4</name>
        <sequence type="described" ref="VSP_036014"/>
    </isoform>
    <isoform>
        <id>P03088-1</id>
        <name>VP1</name>
        <name>Major capsid protein VP1</name>
        <sequence type="external"/>
    </isoform>
    <isoform>
        <id>P03085-1</id>
        <name>Agno</name>
        <sequence type="external"/>
    </isoform>
</comment>
<comment type="miscellaneous">
    <text>The strain Dunlop sequence is shown.</text>
</comment>
<comment type="miscellaneous">
    <molecule>Isoform VP2</molecule>
    <text>Produced by alternative splicing of the late mRNA.</text>
</comment>
<comment type="miscellaneous">
    <molecule>Isoform VP3</molecule>
    <text evidence="4">Produced by alternative initiation at Met-120 of isoform VP2.</text>
</comment>
<comment type="miscellaneous">
    <molecule>Isoform VP4</molecule>
    <text evidence="4">Produced by alternative initiation at Met-229 of isoform VP2.</text>
</comment>
<comment type="similarity">
    <text evidence="4">Belongs to the polyomaviruses capsid protein VP2 family.</text>
</comment>